<comment type="function">
    <text evidence="1">Actin-depolymerizing protein. Severs actin filaments (F-actin) and binds to actin monomers (By similarity).</text>
</comment>
<comment type="similarity">
    <text evidence="3">Belongs to the actin-binding proteins ADF family.</text>
</comment>
<protein>
    <recommendedName>
        <fullName>Actin-depolymerizing factor 5</fullName>
        <shortName>ADF-5</shortName>
        <shortName>OsADF5</shortName>
    </recommendedName>
</protein>
<sequence>MAMAYKMATEGMNVKEECQRWFMEMKWKKVHRFVVYKIDERSRAVLVDKVGGPGEGYEELVAALPTDDCRYAVFDFDFVTVDNCQKSKIFFIAWSPTASRIRAKILYATSKQGLRRVLDGVHYEVQATDSSEMGYDVIRGRAQ</sequence>
<accession>Q10P87</accession>
<accession>B7EFI2</accession>
<dbReference type="EMBL" id="DP000009">
    <property type="protein sequence ID" value="ABF94913.1"/>
    <property type="molecule type" value="Genomic_DNA"/>
</dbReference>
<dbReference type="EMBL" id="AP008209">
    <property type="protein sequence ID" value="BAF11439.1"/>
    <property type="molecule type" value="Genomic_DNA"/>
</dbReference>
<dbReference type="EMBL" id="AP014959">
    <property type="protein sequence ID" value="BAS83209.1"/>
    <property type="molecule type" value="Genomic_DNA"/>
</dbReference>
<dbReference type="EMBL" id="CM000140">
    <property type="protein sequence ID" value="EEE58676.1"/>
    <property type="molecule type" value="Genomic_DNA"/>
</dbReference>
<dbReference type="EMBL" id="AK068859">
    <property type="protein sequence ID" value="BAG91129.1"/>
    <property type="molecule type" value="mRNA"/>
</dbReference>
<dbReference type="EMBL" id="AK104056">
    <property type="protein sequence ID" value="BAG96392.1"/>
    <property type="molecule type" value="mRNA"/>
</dbReference>
<dbReference type="RefSeq" id="XP_015631622.1">
    <property type="nucleotide sequence ID" value="XM_015776136.1"/>
</dbReference>
<dbReference type="SMR" id="Q10P87"/>
<dbReference type="FunCoup" id="Q10P87">
    <property type="interactions" value="2537"/>
</dbReference>
<dbReference type="STRING" id="39947.Q10P87"/>
<dbReference type="PaxDb" id="39947-Q10P87"/>
<dbReference type="EnsemblPlants" id="Os03t0243100-01">
    <property type="protein sequence ID" value="Os03t0243100-01"/>
    <property type="gene ID" value="Os03g0243100"/>
</dbReference>
<dbReference type="Gramene" id="Os03t0243100-01">
    <property type="protein sequence ID" value="Os03t0243100-01"/>
    <property type="gene ID" value="Os03g0243100"/>
</dbReference>
<dbReference type="KEGG" id="dosa:Os03g0243100"/>
<dbReference type="eggNOG" id="KOG1735">
    <property type="taxonomic scope" value="Eukaryota"/>
</dbReference>
<dbReference type="HOGENOM" id="CLU_094004_2_2_1"/>
<dbReference type="InParanoid" id="Q10P87"/>
<dbReference type="OMA" id="FKTECRY"/>
<dbReference type="OrthoDB" id="10249245at2759"/>
<dbReference type="Proteomes" id="UP000000763">
    <property type="component" value="Chromosome 3"/>
</dbReference>
<dbReference type="Proteomes" id="UP000007752">
    <property type="component" value="Chromosome 3"/>
</dbReference>
<dbReference type="Proteomes" id="UP000059680">
    <property type="component" value="Chromosome 3"/>
</dbReference>
<dbReference type="GO" id="GO:0015629">
    <property type="term" value="C:actin cytoskeleton"/>
    <property type="evidence" value="ECO:0000318"/>
    <property type="project" value="GO_Central"/>
</dbReference>
<dbReference type="GO" id="GO:0005737">
    <property type="term" value="C:cytoplasm"/>
    <property type="evidence" value="ECO:0000318"/>
    <property type="project" value="GO_Central"/>
</dbReference>
<dbReference type="GO" id="GO:0051015">
    <property type="term" value="F:actin filament binding"/>
    <property type="evidence" value="ECO:0000318"/>
    <property type="project" value="GO_Central"/>
</dbReference>
<dbReference type="GO" id="GO:0051017">
    <property type="term" value="P:actin filament bundle assembly"/>
    <property type="evidence" value="ECO:0000318"/>
    <property type="project" value="GO_Central"/>
</dbReference>
<dbReference type="GO" id="GO:0030042">
    <property type="term" value="P:actin filament depolymerization"/>
    <property type="evidence" value="ECO:0000318"/>
    <property type="project" value="GO_Central"/>
</dbReference>
<dbReference type="CDD" id="cd11286">
    <property type="entry name" value="ADF_cofilin_like"/>
    <property type="match status" value="1"/>
</dbReference>
<dbReference type="Gene3D" id="3.40.20.10">
    <property type="entry name" value="Severin"/>
    <property type="match status" value="1"/>
</dbReference>
<dbReference type="InterPro" id="IPR002108">
    <property type="entry name" value="ADF-H"/>
</dbReference>
<dbReference type="InterPro" id="IPR029006">
    <property type="entry name" value="ADF-H/Gelsolin-like_dom_sf"/>
</dbReference>
<dbReference type="InterPro" id="IPR017904">
    <property type="entry name" value="ADF/Cofilin"/>
</dbReference>
<dbReference type="PANTHER" id="PTHR11913">
    <property type="entry name" value="COFILIN-RELATED"/>
    <property type="match status" value="1"/>
</dbReference>
<dbReference type="Pfam" id="PF00241">
    <property type="entry name" value="Cofilin_ADF"/>
    <property type="match status" value="1"/>
</dbReference>
<dbReference type="SMART" id="SM00102">
    <property type="entry name" value="ADF"/>
    <property type="match status" value="1"/>
</dbReference>
<dbReference type="SUPFAM" id="SSF55753">
    <property type="entry name" value="Actin depolymerizing proteins"/>
    <property type="match status" value="1"/>
</dbReference>
<dbReference type="PROSITE" id="PS51263">
    <property type="entry name" value="ADF_H"/>
    <property type="match status" value="1"/>
</dbReference>
<evidence type="ECO:0000250" key="1"/>
<evidence type="ECO:0000255" key="2">
    <source>
        <dbReference type="PROSITE-ProRule" id="PRU00599"/>
    </source>
</evidence>
<evidence type="ECO:0000305" key="3"/>
<evidence type="ECO:0000312" key="4">
    <source>
        <dbReference type="EMBL" id="EEE58676.1"/>
    </source>
</evidence>
<reference key="1">
    <citation type="journal article" date="2005" name="Genome Res.">
        <title>Sequence, annotation, and analysis of synteny between rice chromosome 3 and diverged grass species.</title>
        <authorList>
            <consortium name="The rice chromosome 3 sequencing consortium"/>
            <person name="Buell C.R."/>
            <person name="Yuan Q."/>
            <person name="Ouyang S."/>
            <person name="Liu J."/>
            <person name="Zhu W."/>
            <person name="Wang A."/>
            <person name="Maiti R."/>
            <person name="Haas B."/>
            <person name="Wortman J."/>
            <person name="Pertea M."/>
            <person name="Jones K.M."/>
            <person name="Kim M."/>
            <person name="Overton L."/>
            <person name="Tsitrin T."/>
            <person name="Fadrosh D."/>
            <person name="Bera J."/>
            <person name="Weaver B."/>
            <person name="Jin S."/>
            <person name="Johri S."/>
            <person name="Reardon M."/>
            <person name="Webb K."/>
            <person name="Hill J."/>
            <person name="Moffat K."/>
            <person name="Tallon L."/>
            <person name="Van Aken S."/>
            <person name="Lewis M."/>
            <person name="Utterback T."/>
            <person name="Feldblyum T."/>
            <person name="Zismann V."/>
            <person name="Iobst S."/>
            <person name="Hsiao J."/>
            <person name="de Vazeille A.R."/>
            <person name="Salzberg S.L."/>
            <person name="White O."/>
            <person name="Fraser C.M."/>
            <person name="Yu Y."/>
            <person name="Kim H."/>
            <person name="Rambo T."/>
            <person name="Currie J."/>
            <person name="Collura K."/>
            <person name="Kernodle-Thompson S."/>
            <person name="Wei F."/>
            <person name="Kudrna K."/>
            <person name="Ammiraju J.S.S."/>
            <person name="Luo M."/>
            <person name="Goicoechea J.L."/>
            <person name="Wing R.A."/>
            <person name="Henry D."/>
            <person name="Oates R."/>
            <person name="Palmer M."/>
            <person name="Pries G."/>
            <person name="Saski C."/>
            <person name="Simmons J."/>
            <person name="Soderlund C."/>
            <person name="Nelson W."/>
            <person name="de la Bastide M."/>
            <person name="Spiegel L."/>
            <person name="Nascimento L."/>
            <person name="Huang E."/>
            <person name="Preston R."/>
            <person name="Zutavern T."/>
            <person name="Palmer L."/>
            <person name="O'Shaughnessy A."/>
            <person name="Dike S."/>
            <person name="McCombie W.R."/>
            <person name="Minx P."/>
            <person name="Cordum H."/>
            <person name="Wilson R."/>
            <person name="Jin W."/>
            <person name="Lee H.R."/>
            <person name="Jiang J."/>
            <person name="Jackson S."/>
        </authorList>
    </citation>
    <scope>NUCLEOTIDE SEQUENCE [LARGE SCALE GENOMIC DNA]</scope>
    <source>
        <strain>cv. Nipponbare</strain>
    </source>
</reference>
<reference key="2">
    <citation type="journal article" date="2005" name="Nature">
        <title>The map-based sequence of the rice genome.</title>
        <authorList>
            <consortium name="International rice genome sequencing project (IRGSP)"/>
        </authorList>
    </citation>
    <scope>NUCLEOTIDE SEQUENCE [LARGE SCALE GENOMIC DNA]</scope>
    <source>
        <strain>cv. Nipponbare</strain>
    </source>
</reference>
<reference key="3">
    <citation type="journal article" date="2008" name="Nucleic Acids Res.">
        <title>The rice annotation project database (RAP-DB): 2008 update.</title>
        <authorList>
            <consortium name="The rice annotation project (RAP)"/>
        </authorList>
    </citation>
    <scope>GENOME REANNOTATION</scope>
    <source>
        <strain>cv. Nipponbare</strain>
    </source>
</reference>
<reference key="4">
    <citation type="journal article" date="2013" name="Rice">
        <title>Improvement of the Oryza sativa Nipponbare reference genome using next generation sequence and optical map data.</title>
        <authorList>
            <person name="Kawahara Y."/>
            <person name="de la Bastide M."/>
            <person name="Hamilton J.P."/>
            <person name="Kanamori H."/>
            <person name="McCombie W.R."/>
            <person name="Ouyang S."/>
            <person name="Schwartz D.C."/>
            <person name="Tanaka T."/>
            <person name="Wu J."/>
            <person name="Zhou S."/>
            <person name="Childs K.L."/>
            <person name="Davidson R.M."/>
            <person name="Lin H."/>
            <person name="Quesada-Ocampo L."/>
            <person name="Vaillancourt B."/>
            <person name="Sakai H."/>
            <person name="Lee S.S."/>
            <person name="Kim J."/>
            <person name="Numa H."/>
            <person name="Itoh T."/>
            <person name="Buell C.R."/>
            <person name="Matsumoto T."/>
        </authorList>
    </citation>
    <scope>GENOME REANNOTATION</scope>
    <source>
        <strain>cv. Nipponbare</strain>
    </source>
</reference>
<reference key="5">
    <citation type="journal article" date="2005" name="PLoS Biol.">
        <title>The genomes of Oryza sativa: a history of duplications.</title>
        <authorList>
            <person name="Yu J."/>
            <person name="Wang J."/>
            <person name="Lin W."/>
            <person name="Li S."/>
            <person name="Li H."/>
            <person name="Zhou J."/>
            <person name="Ni P."/>
            <person name="Dong W."/>
            <person name="Hu S."/>
            <person name="Zeng C."/>
            <person name="Zhang J."/>
            <person name="Zhang Y."/>
            <person name="Li R."/>
            <person name="Xu Z."/>
            <person name="Li S."/>
            <person name="Li X."/>
            <person name="Zheng H."/>
            <person name="Cong L."/>
            <person name="Lin L."/>
            <person name="Yin J."/>
            <person name="Geng J."/>
            <person name="Li G."/>
            <person name="Shi J."/>
            <person name="Liu J."/>
            <person name="Lv H."/>
            <person name="Li J."/>
            <person name="Wang J."/>
            <person name="Deng Y."/>
            <person name="Ran L."/>
            <person name="Shi X."/>
            <person name="Wang X."/>
            <person name="Wu Q."/>
            <person name="Li C."/>
            <person name="Ren X."/>
            <person name="Wang J."/>
            <person name="Wang X."/>
            <person name="Li D."/>
            <person name="Liu D."/>
            <person name="Zhang X."/>
            <person name="Ji Z."/>
            <person name="Zhao W."/>
            <person name="Sun Y."/>
            <person name="Zhang Z."/>
            <person name="Bao J."/>
            <person name="Han Y."/>
            <person name="Dong L."/>
            <person name="Ji J."/>
            <person name="Chen P."/>
            <person name="Wu S."/>
            <person name="Liu J."/>
            <person name="Xiao Y."/>
            <person name="Bu D."/>
            <person name="Tan J."/>
            <person name="Yang L."/>
            <person name="Ye C."/>
            <person name="Zhang J."/>
            <person name="Xu J."/>
            <person name="Zhou Y."/>
            <person name="Yu Y."/>
            <person name="Zhang B."/>
            <person name="Zhuang S."/>
            <person name="Wei H."/>
            <person name="Liu B."/>
            <person name="Lei M."/>
            <person name="Yu H."/>
            <person name="Li Y."/>
            <person name="Xu H."/>
            <person name="Wei S."/>
            <person name="He X."/>
            <person name="Fang L."/>
            <person name="Zhang Z."/>
            <person name="Zhang Y."/>
            <person name="Huang X."/>
            <person name="Su Z."/>
            <person name="Tong W."/>
            <person name="Li J."/>
            <person name="Tong Z."/>
            <person name="Li S."/>
            <person name="Ye J."/>
            <person name="Wang L."/>
            <person name="Fang L."/>
            <person name="Lei T."/>
            <person name="Chen C.-S."/>
            <person name="Chen H.-C."/>
            <person name="Xu Z."/>
            <person name="Li H."/>
            <person name="Huang H."/>
            <person name="Zhang F."/>
            <person name="Xu H."/>
            <person name="Li N."/>
            <person name="Zhao C."/>
            <person name="Li S."/>
            <person name="Dong L."/>
            <person name="Huang Y."/>
            <person name="Li L."/>
            <person name="Xi Y."/>
            <person name="Qi Q."/>
            <person name="Li W."/>
            <person name="Zhang B."/>
            <person name="Hu W."/>
            <person name="Zhang Y."/>
            <person name="Tian X."/>
            <person name="Jiao Y."/>
            <person name="Liang X."/>
            <person name="Jin J."/>
            <person name="Gao L."/>
            <person name="Zheng W."/>
            <person name="Hao B."/>
            <person name="Liu S.-M."/>
            <person name="Wang W."/>
            <person name="Yuan L."/>
            <person name="Cao M."/>
            <person name="McDermott J."/>
            <person name="Samudrala R."/>
            <person name="Wang J."/>
            <person name="Wong G.K.-S."/>
            <person name="Yang H."/>
        </authorList>
    </citation>
    <scope>NUCLEOTIDE SEQUENCE [LARGE SCALE GENOMIC DNA]</scope>
    <source>
        <strain>cv. Nipponbare</strain>
    </source>
</reference>
<reference key="6">
    <citation type="journal article" date="2003" name="Science">
        <title>Collection, mapping, and annotation of over 28,000 cDNA clones from japonica rice.</title>
        <authorList>
            <consortium name="The rice full-length cDNA consortium"/>
        </authorList>
    </citation>
    <scope>NUCLEOTIDE SEQUENCE [LARGE SCALE MRNA]</scope>
    <source>
        <strain>cv. Nipponbare</strain>
    </source>
</reference>
<reference key="7">
    <citation type="journal article" date="2006" name="J. Plant Physiol.">
        <title>Comparative study of rice and Arabidopsis actin-depolymerizing factors gene families.</title>
        <authorList>
            <person name="Feng Y."/>
            <person name="Liu Q."/>
            <person name="Xue Q."/>
        </authorList>
    </citation>
    <scope>GENE FAMILY</scope>
</reference>
<organism>
    <name type="scientific">Oryza sativa subsp. japonica</name>
    <name type="common">Rice</name>
    <dbReference type="NCBI Taxonomy" id="39947"/>
    <lineage>
        <taxon>Eukaryota</taxon>
        <taxon>Viridiplantae</taxon>
        <taxon>Streptophyta</taxon>
        <taxon>Embryophyta</taxon>
        <taxon>Tracheophyta</taxon>
        <taxon>Spermatophyta</taxon>
        <taxon>Magnoliopsida</taxon>
        <taxon>Liliopsida</taxon>
        <taxon>Poales</taxon>
        <taxon>Poaceae</taxon>
        <taxon>BOP clade</taxon>
        <taxon>Oryzoideae</taxon>
        <taxon>Oryzeae</taxon>
        <taxon>Oryzinae</taxon>
        <taxon>Oryza</taxon>
        <taxon>Oryza sativa</taxon>
    </lineage>
</organism>
<gene>
    <name type="primary">ADF5</name>
    <name type="ordered locus">Os03g0243100</name>
    <name type="ordered locus">LOC_Os03g13950</name>
    <name evidence="4" type="ORF">OsJ_10102</name>
</gene>
<proteinExistence type="evidence at transcript level"/>
<name>ADF5_ORYSJ</name>
<feature type="chain" id="PRO_0000278108" description="Actin-depolymerizing factor 5">
    <location>
        <begin position="1"/>
        <end position="143"/>
    </location>
</feature>
<feature type="domain" description="ADF-H" evidence="2">
    <location>
        <begin position="11"/>
        <end position="143"/>
    </location>
</feature>
<keyword id="KW-0009">Actin-binding</keyword>
<keyword id="KW-1185">Reference proteome</keyword>